<keyword id="KW-0025">Alternative splicing</keyword>
<keyword id="KW-0067">ATP-binding</keyword>
<keyword id="KW-0175">Coiled coil</keyword>
<keyword id="KW-0963">Cytoplasm</keyword>
<keyword id="KW-0206">Cytoskeleton</keyword>
<keyword id="KW-0493">Microtubule</keyword>
<keyword id="KW-0505">Motor protein</keyword>
<keyword id="KW-0547">Nucleotide-binding</keyword>
<keyword id="KW-1267">Proteomics identification</keyword>
<keyword id="KW-1185">Reference proteome</keyword>
<comment type="interaction">
    <interactant intactId="EBI-751100">
        <id>Q6ZMV9</id>
    </interactant>
    <interactant intactId="EBI-743771">
        <id>Q92624</id>
        <label>APPBP2</label>
    </interactant>
    <organismsDiffer>false</organismsDiffer>
    <experiments>3</experiments>
</comment>
<comment type="subcellular location">
    <subcellularLocation>
        <location evidence="9">Cytoplasm</location>
        <location evidence="9">Cytoskeleton</location>
    </subcellularLocation>
</comment>
<comment type="alternative products">
    <event type="alternative splicing"/>
    <isoform>
        <id>Q6ZMV9-1</id>
        <name>1</name>
        <sequence type="displayed"/>
    </isoform>
    <isoform>
        <id>Q6ZMV9-2</id>
        <name>2</name>
        <sequence type="described" ref="VSP_014468"/>
    </isoform>
    <isoform>
        <id>Q6ZMV9-3</id>
        <name>3</name>
        <sequence type="described" ref="VSP_014471"/>
    </isoform>
    <isoform>
        <id>Q6ZMV9-4</id>
        <name>4</name>
        <sequence type="described" ref="VSP_014468 VSP_014469 VSP_014470"/>
    </isoform>
</comment>
<comment type="similarity">
    <text evidence="2">Belongs to the TRAFAC class myosin-kinesin ATPase superfamily. Kinesin family.</text>
</comment>
<gene>
    <name type="primary">KIF6</name>
    <name type="synonym">C6orf102</name>
</gene>
<evidence type="ECO:0000255" key="1"/>
<evidence type="ECO:0000255" key="2">
    <source>
        <dbReference type="PROSITE-ProRule" id="PRU00283"/>
    </source>
</evidence>
<evidence type="ECO:0000256" key="3">
    <source>
        <dbReference type="SAM" id="MobiDB-lite"/>
    </source>
</evidence>
<evidence type="ECO:0000269" key="4">
    <source>
    </source>
</evidence>
<evidence type="ECO:0000269" key="5">
    <source>
    </source>
</evidence>
<evidence type="ECO:0000303" key="6">
    <source>
    </source>
</evidence>
<evidence type="ECO:0000303" key="7">
    <source>
    </source>
</evidence>
<evidence type="ECO:0000303" key="8">
    <source>
    </source>
</evidence>
<evidence type="ECO:0000305" key="9"/>
<organism>
    <name type="scientific">Homo sapiens</name>
    <name type="common">Human</name>
    <dbReference type="NCBI Taxonomy" id="9606"/>
    <lineage>
        <taxon>Eukaryota</taxon>
        <taxon>Metazoa</taxon>
        <taxon>Chordata</taxon>
        <taxon>Craniata</taxon>
        <taxon>Vertebrata</taxon>
        <taxon>Euteleostomi</taxon>
        <taxon>Mammalia</taxon>
        <taxon>Eutheria</taxon>
        <taxon>Euarchontoglires</taxon>
        <taxon>Primates</taxon>
        <taxon>Haplorrhini</taxon>
        <taxon>Catarrhini</taxon>
        <taxon>Hominidae</taxon>
        <taxon>Homo</taxon>
    </lineage>
</organism>
<accession>Q6ZMV9</accession>
<accession>Q2MDE3</accession>
<accession>Q2MDE4</accession>
<accession>Q5T8J6</accession>
<accession>Q6ZWE3</accession>
<accession>Q86T87</accession>
<accession>Q8WTV4</accession>
<feature type="chain" id="PRO_0000125441" description="Kinesin-like protein KIF6">
    <location>
        <begin position="1"/>
        <end position="814"/>
    </location>
</feature>
<feature type="domain" description="Kinesin motor" evidence="2">
    <location>
        <begin position="5"/>
        <end position="345"/>
    </location>
</feature>
<feature type="region of interest" description="Disordered" evidence="3">
    <location>
        <begin position="752"/>
        <end position="788"/>
    </location>
</feature>
<feature type="coiled-coil region" evidence="1">
    <location>
        <begin position="356"/>
        <end position="385"/>
    </location>
</feature>
<feature type="coiled-coil region" evidence="1">
    <location>
        <begin position="456"/>
        <end position="494"/>
    </location>
</feature>
<feature type="coiled-coil region" evidence="1">
    <location>
        <begin position="588"/>
        <end position="683"/>
    </location>
</feature>
<feature type="compositionally biased region" description="Polar residues" evidence="3">
    <location>
        <begin position="759"/>
        <end position="771"/>
    </location>
</feature>
<feature type="binding site" evidence="2">
    <location>
        <begin position="97"/>
        <end position="104"/>
    </location>
    <ligand>
        <name>ATP</name>
        <dbReference type="ChEBI" id="CHEBI:30616"/>
    </ligand>
</feature>
<feature type="splice variant" id="VSP_014468" description="In isoform 2 and isoform 4." evidence="6 7">
    <location>
        <begin position="1"/>
        <end position="549"/>
    </location>
</feature>
<feature type="splice variant" id="VSP_014469" description="In isoform 4." evidence="6">
    <original>PFLQTSDSQHEWS</original>
    <variation>SKIKALADSMSVM</variation>
    <location>
        <begin position="708"/>
        <end position="720"/>
    </location>
</feature>
<feature type="splice variant" id="VSP_014470" description="In isoform 4." evidence="6">
    <location>
        <begin position="721"/>
        <end position="814"/>
    </location>
</feature>
<feature type="splice variant" id="VSP_014471" description="In isoform 3." evidence="8">
    <location>
        <begin position="728"/>
        <end position="744"/>
    </location>
</feature>
<feature type="sequence variant" id="VAR_036217" description="In a breast cancer sample; somatic mutation." evidence="5">
    <original>A</original>
    <variation>E</variation>
    <location>
        <position position="386"/>
    </location>
</feature>
<feature type="sequence variant" id="VAR_049698" description="In dbSNP:rs2273063.">
    <original>R</original>
    <variation>H</variation>
    <location>
        <position position="512"/>
    </location>
</feature>
<feature type="sequence variant" id="VAR_022810" description="In dbSNP:rs20455." evidence="4">
    <original>W</original>
    <variation>R</variation>
    <location>
        <position position="719"/>
    </location>
</feature>
<feature type="sequence conflict" description="In Ref. 1; BAD18616." evidence="9" ref="1">
    <original>R</original>
    <variation>K</variation>
    <location>
        <position position="551"/>
    </location>
</feature>
<feature type="sequence conflict" description="In Ref. 4; CAD89950." evidence="9" ref="4">
    <original>CQEAFEIFKRDHADSVTIDDNKQILKQ</original>
    <variation>NATILSSLTGPGLQHFGEKIQFAPQEN</variation>
    <location>
        <begin position="558"/>
        <end position="584"/>
    </location>
</feature>
<feature type="sequence conflict" description="In Ref. 1; BAD18616." evidence="9" ref="1">
    <original>S</original>
    <variation>F</variation>
    <location>
        <position position="715"/>
    </location>
</feature>
<feature type="sequence conflict" description="In Ref. 1; BAD18616." evidence="9" ref="1">
    <original>E</original>
    <variation>G</variation>
    <location>
        <position position="772"/>
    </location>
</feature>
<name>KIF6_HUMAN</name>
<proteinExistence type="evidence at protein level"/>
<dbReference type="EMBL" id="AK123217">
    <property type="protein sequence ID" value="BAC85560.1"/>
    <property type="molecule type" value="mRNA"/>
</dbReference>
<dbReference type="EMBL" id="AK131471">
    <property type="protein sequence ID" value="BAD18616.1"/>
    <property type="molecule type" value="mRNA"/>
</dbReference>
<dbReference type="EMBL" id="AL035464">
    <property type="status" value="NOT_ANNOTATED_CDS"/>
    <property type="molecule type" value="Genomic_DNA"/>
</dbReference>
<dbReference type="EMBL" id="AL136087">
    <property type="status" value="NOT_ANNOTATED_CDS"/>
    <property type="molecule type" value="Genomic_DNA"/>
</dbReference>
<dbReference type="EMBL" id="AL160161">
    <property type="status" value="NOT_ANNOTATED_CDS"/>
    <property type="molecule type" value="Genomic_DNA"/>
</dbReference>
<dbReference type="EMBL" id="AL161439">
    <property type="status" value="NOT_ANNOTATED_CDS"/>
    <property type="molecule type" value="Genomic_DNA"/>
</dbReference>
<dbReference type="EMBL" id="AL590387">
    <property type="status" value="NOT_ANNOTATED_CDS"/>
    <property type="molecule type" value="Genomic_DNA"/>
</dbReference>
<dbReference type="EMBL" id="BC022074">
    <property type="protein sequence ID" value="AAH22074.1"/>
    <property type="molecule type" value="mRNA"/>
</dbReference>
<dbReference type="EMBL" id="BX649045">
    <property type="status" value="NOT_ANNOTATED_CDS"/>
    <property type="molecule type" value="mRNA"/>
</dbReference>
<dbReference type="EMBL" id="AL832634">
    <property type="protein sequence ID" value="CAD89950.1"/>
    <property type="molecule type" value="mRNA"/>
</dbReference>
<dbReference type="CCDS" id="CCDS4844.1">
    <molecule id="Q6ZMV9-1"/>
</dbReference>
<dbReference type="CCDS" id="CCDS75449.1">
    <molecule id="Q6ZMV9-2"/>
</dbReference>
<dbReference type="RefSeq" id="NP_001275953.1">
    <molecule id="Q6ZMV9-2"/>
    <property type="nucleotide sequence ID" value="NM_001289024.3"/>
</dbReference>
<dbReference type="RefSeq" id="NP_659464.3">
    <molecule id="Q6ZMV9-1"/>
    <property type="nucleotide sequence ID" value="NM_145027.4"/>
</dbReference>
<dbReference type="RefSeq" id="XP_011512661.1">
    <property type="nucleotide sequence ID" value="XM_011514359.2"/>
</dbReference>
<dbReference type="SMR" id="Q6ZMV9"/>
<dbReference type="BioGRID" id="128728">
    <property type="interactions" value="8"/>
</dbReference>
<dbReference type="FunCoup" id="Q6ZMV9">
    <property type="interactions" value="48"/>
</dbReference>
<dbReference type="IntAct" id="Q6ZMV9">
    <property type="interactions" value="8"/>
</dbReference>
<dbReference type="MINT" id="Q6ZMV9"/>
<dbReference type="STRING" id="9606.ENSP00000287152"/>
<dbReference type="ChEMBL" id="CHEMBL3308907"/>
<dbReference type="iPTMnet" id="Q6ZMV9"/>
<dbReference type="PhosphoSitePlus" id="Q6ZMV9"/>
<dbReference type="BioMuta" id="KIF6"/>
<dbReference type="DMDM" id="146345445"/>
<dbReference type="jPOST" id="Q6ZMV9"/>
<dbReference type="MassIVE" id="Q6ZMV9"/>
<dbReference type="PaxDb" id="9606-ENSP00000287152"/>
<dbReference type="PeptideAtlas" id="Q6ZMV9"/>
<dbReference type="ProteomicsDB" id="67924">
    <molecule id="Q6ZMV9-1"/>
</dbReference>
<dbReference type="ProteomicsDB" id="67925">
    <molecule id="Q6ZMV9-2"/>
</dbReference>
<dbReference type="ProteomicsDB" id="67926">
    <molecule id="Q6ZMV9-3"/>
</dbReference>
<dbReference type="ProteomicsDB" id="67927">
    <molecule id="Q6ZMV9-4"/>
</dbReference>
<dbReference type="Antibodypedia" id="29939">
    <property type="antibodies" value="216 antibodies from 26 providers"/>
</dbReference>
<dbReference type="DNASU" id="221458"/>
<dbReference type="Ensembl" id="ENST00000229913.9">
    <molecule id="Q6ZMV9-2"/>
    <property type="protein sequence ID" value="ENSP00000229913.5"/>
    <property type="gene ID" value="ENSG00000164627.18"/>
</dbReference>
<dbReference type="Ensembl" id="ENST00000287152.12">
    <molecule id="Q6ZMV9-1"/>
    <property type="protein sequence ID" value="ENSP00000287152.7"/>
    <property type="gene ID" value="ENSG00000164627.18"/>
</dbReference>
<dbReference type="GeneID" id="221458"/>
<dbReference type="KEGG" id="hsa:221458"/>
<dbReference type="MANE-Select" id="ENST00000287152.12">
    <property type="protein sequence ID" value="ENSP00000287152.7"/>
    <property type="RefSeq nucleotide sequence ID" value="NM_145027.6"/>
    <property type="RefSeq protein sequence ID" value="NP_659464.3"/>
</dbReference>
<dbReference type="UCSC" id="uc003oos.3">
    <molecule id="Q6ZMV9-1"/>
    <property type="organism name" value="human"/>
</dbReference>
<dbReference type="AGR" id="HGNC:21202"/>
<dbReference type="CTD" id="221458"/>
<dbReference type="DisGeNET" id="221458"/>
<dbReference type="GeneCards" id="KIF6"/>
<dbReference type="HGNC" id="HGNC:21202">
    <property type="gene designation" value="KIF6"/>
</dbReference>
<dbReference type="HPA" id="ENSG00000164627">
    <property type="expression patterns" value="Tissue enhanced (brain, testis)"/>
</dbReference>
<dbReference type="MIM" id="613919">
    <property type="type" value="gene"/>
</dbReference>
<dbReference type="neXtProt" id="NX_Q6ZMV9"/>
<dbReference type="OpenTargets" id="ENSG00000164627"/>
<dbReference type="PharmGKB" id="PA134920075"/>
<dbReference type="VEuPathDB" id="HostDB:ENSG00000164627"/>
<dbReference type="eggNOG" id="KOG0242">
    <property type="taxonomic scope" value="Eukaryota"/>
</dbReference>
<dbReference type="eggNOG" id="KOG4280">
    <property type="taxonomic scope" value="Eukaryota"/>
</dbReference>
<dbReference type="GeneTree" id="ENSGT00940000157697"/>
<dbReference type="HOGENOM" id="CLU_001485_16_1_1"/>
<dbReference type="InParanoid" id="Q6ZMV9"/>
<dbReference type="OMA" id="DFDLWYQ"/>
<dbReference type="OrthoDB" id="3176171at2759"/>
<dbReference type="PAN-GO" id="Q6ZMV9">
    <property type="GO annotations" value="6 GO annotations based on evolutionary models"/>
</dbReference>
<dbReference type="PhylomeDB" id="Q6ZMV9"/>
<dbReference type="TreeFam" id="TF329752"/>
<dbReference type="PathwayCommons" id="Q6ZMV9"/>
<dbReference type="Reactome" id="R-HSA-6811434">
    <property type="pathway name" value="COPI-dependent Golgi-to-ER retrograde traffic"/>
</dbReference>
<dbReference type="Reactome" id="R-HSA-983189">
    <property type="pathway name" value="Kinesins"/>
</dbReference>
<dbReference type="SignaLink" id="Q6ZMV9"/>
<dbReference type="BioGRID-ORCS" id="221458">
    <property type="hits" value="15 hits in 1149 CRISPR screens"/>
</dbReference>
<dbReference type="ChiTaRS" id="KIF6">
    <property type="organism name" value="human"/>
</dbReference>
<dbReference type="GenomeRNAi" id="221458"/>
<dbReference type="Pharos" id="Q6ZMV9">
    <property type="development level" value="Tbio"/>
</dbReference>
<dbReference type="PRO" id="PR:Q6ZMV9"/>
<dbReference type="Proteomes" id="UP000005640">
    <property type="component" value="Chromosome 6"/>
</dbReference>
<dbReference type="RNAct" id="Q6ZMV9">
    <property type="molecule type" value="protein"/>
</dbReference>
<dbReference type="Bgee" id="ENSG00000164627">
    <property type="expression patterns" value="Expressed in right uterine tube and 138 other cell types or tissues"/>
</dbReference>
<dbReference type="ExpressionAtlas" id="Q6ZMV9">
    <property type="expression patterns" value="baseline and differential"/>
</dbReference>
<dbReference type="GO" id="GO:0005737">
    <property type="term" value="C:cytoplasm"/>
    <property type="evidence" value="ECO:0000318"/>
    <property type="project" value="GO_Central"/>
</dbReference>
<dbReference type="GO" id="GO:0005871">
    <property type="term" value="C:kinesin complex"/>
    <property type="evidence" value="ECO:0000318"/>
    <property type="project" value="GO_Central"/>
</dbReference>
<dbReference type="GO" id="GO:0005874">
    <property type="term" value="C:microtubule"/>
    <property type="evidence" value="ECO:0000318"/>
    <property type="project" value="GO_Central"/>
</dbReference>
<dbReference type="GO" id="GO:0005524">
    <property type="term" value="F:ATP binding"/>
    <property type="evidence" value="ECO:0007669"/>
    <property type="project" value="UniProtKB-KW"/>
</dbReference>
<dbReference type="GO" id="GO:0016887">
    <property type="term" value="F:ATP hydrolysis activity"/>
    <property type="evidence" value="ECO:0000318"/>
    <property type="project" value="GO_Central"/>
</dbReference>
<dbReference type="GO" id="GO:0008017">
    <property type="term" value="F:microtubule binding"/>
    <property type="evidence" value="ECO:0000318"/>
    <property type="project" value="GO_Central"/>
</dbReference>
<dbReference type="GO" id="GO:0003777">
    <property type="term" value="F:microtubule motor activity"/>
    <property type="evidence" value="ECO:0000318"/>
    <property type="project" value="GO_Central"/>
</dbReference>
<dbReference type="GO" id="GO:0007018">
    <property type="term" value="P:microtubule-based movement"/>
    <property type="evidence" value="ECO:0000318"/>
    <property type="project" value="GO_Central"/>
</dbReference>
<dbReference type="FunFam" id="3.40.850.10:FF:000039">
    <property type="entry name" value="Kinesin-like protein"/>
    <property type="match status" value="1"/>
</dbReference>
<dbReference type="Gene3D" id="3.40.850.10">
    <property type="entry name" value="Kinesin motor domain"/>
    <property type="match status" value="1"/>
</dbReference>
<dbReference type="InterPro" id="IPR056524">
    <property type="entry name" value="KIF6/9_C"/>
</dbReference>
<dbReference type="InterPro" id="IPR027640">
    <property type="entry name" value="Kinesin-like_fam"/>
</dbReference>
<dbReference type="InterPro" id="IPR019821">
    <property type="entry name" value="Kinesin_motor_CS"/>
</dbReference>
<dbReference type="InterPro" id="IPR001752">
    <property type="entry name" value="Kinesin_motor_dom"/>
</dbReference>
<dbReference type="InterPro" id="IPR036961">
    <property type="entry name" value="Kinesin_motor_dom_sf"/>
</dbReference>
<dbReference type="InterPro" id="IPR027417">
    <property type="entry name" value="P-loop_NTPase"/>
</dbReference>
<dbReference type="PANTHER" id="PTHR47968">
    <property type="entry name" value="CENTROMERE PROTEIN E"/>
    <property type="match status" value="1"/>
</dbReference>
<dbReference type="PANTHER" id="PTHR47968:SF67">
    <property type="entry name" value="KINESIN MOTOR DOMAIN-CONTAINING PROTEIN"/>
    <property type="match status" value="1"/>
</dbReference>
<dbReference type="Pfam" id="PF23735">
    <property type="entry name" value="KIF9"/>
    <property type="match status" value="1"/>
</dbReference>
<dbReference type="Pfam" id="PF00225">
    <property type="entry name" value="Kinesin"/>
    <property type="match status" value="1"/>
</dbReference>
<dbReference type="PRINTS" id="PR00380">
    <property type="entry name" value="KINESINHEAVY"/>
</dbReference>
<dbReference type="SMART" id="SM00129">
    <property type="entry name" value="KISc"/>
    <property type="match status" value="1"/>
</dbReference>
<dbReference type="SUPFAM" id="SSF52540">
    <property type="entry name" value="P-loop containing nucleoside triphosphate hydrolases"/>
    <property type="match status" value="1"/>
</dbReference>
<dbReference type="PROSITE" id="PS00411">
    <property type="entry name" value="KINESIN_MOTOR_1"/>
    <property type="match status" value="1"/>
</dbReference>
<dbReference type="PROSITE" id="PS50067">
    <property type="entry name" value="KINESIN_MOTOR_2"/>
    <property type="match status" value="1"/>
</dbReference>
<reference key="1">
    <citation type="journal article" date="2004" name="Nat. Genet.">
        <title>Complete sequencing and characterization of 21,243 full-length human cDNAs.</title>
        <authorList>
            <person name="Ota T."/>
            <person name="Suzuki Y."/>
            <person name="Nishikawa T."/>
            <person name="Otsuki T."/>
            <person name="Sugiyama T."/>
            <person name="Irie R."/>
            <person name="Wakamatsu A."/>
            <person name="Hayashi K."/>
            <person name="Sato H."/>
            <person name="Nagai K."/>
            <person name="Kimura K."/>
            <person name="Makita H."/>
            <person name="Sekine M."/>
            <person name="Obayashi M."/>
            <person name="Nishi T."/>
            <person name="Shibahara T."/>
            <person name="Tanaka T."/>
            <person name="Ishii S."/>
            <person name="Yamamoto J."/>
            <person name="Saito K."/>
            <person name="Kawai Y."/>
            <person name="Isono Y."/>
            <person name="Nakamura Y."/>
            <person name="Nagahari K."/>
            <person name="Murakami K."/>
            <person name="Yasuda T."/>
            <person name="Iwayanagi T."/>
            <person name="Wagatsuma M."/>
            <person name="Shiratori A."/>
            <person name="Sudo H."/>
            <person name="Hosoiri T."/>
            <person name="Kaku Y."/>
            <person name="Kodaira H."/>
            <person name="Kondo H."/>
            <person name="Sugawara M."/>
            <person name="Takahashi M."/>
            <person name="Kanda K."/>
            <person name="Yokoi T."/>
            <person name="Furuya T."/>
            <person name="Kikkawa E."/>
            <person name="Omura Y."/>
            <person name="Abe K."/>
            <person name="Kamihara K."/>
            <person name="Katsuta N."/>
            <person name="Sato K."/>
            <person name="Tanikawa M."/>
            <person name="Yamazaki M."/>
            <person name="Ninomiya K."/>
            <person name="Ishibashi T."/>
            <person name="Yamashita H."/>
            <person name="Murakawa K."/>
            <person name="Fujimori K."/>
            <person name="Tanai H."/>
            <person name="Kimata M."/>
            <person name="Watanabe M."/>
            <person name="Hiraoka S."/>
            <person name="Chiba Y."/>
            <person name="Ishida S."/>
            <person name="Ono Y."/>
            <person name="Takiguchi S."/>
            <person name="Watanabe S."/>
            <person name="Yosida M."/>
            <person name="Hotuta T."/>
            <person name="Kusano J."/>
            <person name="Kanehori K."/>
            <person name="Takahashi-Fujii A."/>
            <person name="Hara H."/>
            <person name="Tanase T.-O."/>
            <person name="Nomura Y."/>
            <person name="Togiya S."/>
            <person name="Komai F."/>
            <person name="Hara R."/>
            <person name="Takeuchi K."/>
            <person name="Arita M."/>
            <person name="Imose N."/>
            <person name="Musashino K."/>
            <person name="Yuuki H."/>
            <person name="Oshima A."/>
            <person name="Sasaki N."/>
            <person name="Aotsuka S."/>
            <person name="Yoshikawa Y."/>
            <person name="Matsunawa H."/>
            <person name="Ichihara T."/>
            <person name="Shiohata N."/>
            <person name="Sano S."/>
            <person name="Moriya S."/>
            <person name="Momiyama H."/>
            <person name="Satoh N."/>
            <person name="Takami S."/>
            <person name="Terashima Y."/>
            <person name="Suzuki O."/>
            <person name="Nakagawa S."/>
            <person name="Senoh A."/>
            <person name="Mizoguchi H."/>
            <person name="Goto Y."/>
            <person name="Shimizu F."/>
            <person name="Wakebe H."/>
            <person name="Hishigaki H."/>
            <person name="Watanabe T."/>
            <person name="Sugiyama A."/>
            <person name="Takemoto M."/>
            <person name="Kawakami B."/>
            <person name="Yamazaki M."/>
            <person name="Watanabe K."/>
            <person name="Kumagai A."/>
            <person name="Itakura S."/>
            <person name="Fukuzumi Y."/>
            <person name="Fujimori Y."/>
            <person name="Komiyama M."/>
            <person name="Tashiro H."/>
            <person name="Tanigami A."/>
            <person name="Fujiwara T."/>
            <person name="Ono T."/>
            <person name="Yamada K."/>
            <person name="Fujii Y."/>
            <person name="Ozaki K."/>
            <person name="Hirao M."/>
            <person name="Ohmori Y."/>
            <person name="Kawabata A."/>
            <person name="Hikiji T."/>
            <person name="Kobatake N."/>
            <person name="Inagaki H."/>
            <person name="Ikema Y."/>
            <person name="Okamoto S."/>
            <person name="Okitani R."/>
            <person name="Kawakami T."/>
            <person name="Noguchi S."/>
            <person name="Itoh T."/>
            <person name="Shigeta K."/>
            <person name="Senba T."/>
            <person name="Matsumura K."/>
            <person name="Nakajima Y."/>
            <person name="Mizuno T."/>
            <person name="Morinaga M."/>
            <person name="Sasaki M."/>
            <person name="Togashi T."/>
            <person name="Oyama M."/>
            <person name="Hata H."/>
            <person name="Watanabe M."/>
            <person name="Komatsu T."/>
            <person name="Mizushima-Sugano J."/>
            <person name="Satoh T."/>
            <person name="Shirai Y."/>
            <person name="Takahashi Y."/>
            <person name="Nakagawa K."/>
            <person name="Okumura K."/>
            <person name="Nagase T."/>
            <person name="Nomura N."/>
            <person name="Kikuchi H."/>
            <person name="Masuho Y."/>
            <person name="Yamashita R."/>
            <person name="Nakai K."/>
            <person name="Yada T."/>
            <person name="Nakamura Y."/>
            <person name="Ohara O."/>
            <person name="Isogai T."/>
            <person name="Sugano S."/>
        </authorList>
    </citation>
    <scope>NUCLEOTIDE SEQUENCE [LARGE SCALE MRNA] (ISOFORMS 1 AND 4)</scope>
    <scope>VARIANT ARG-719</scope>
    <source>
        <tissue>Amygdala</tissue>
        <tissue>Testis</tissue>
    </source>
</reference>
<reference key="2">
    <citation type="journal article" date="2003" name="Nature">
        <title>The DNA sequence and analysis of human chromosome 6.</title>
        <authorList>
            <person name="Mungall A.J."/>
            <person name="Palmer S.A."/>
            <person name="Sims S.K."/>
            <person name="Edwards C.A."/>
            <person name="Ashurst J.L."/>
            <person name="Wilming L."/>
            <person name="Jones M.C."/>
            <person name="Horton R."/>
            <person name="Hunt S.E."/>
            <person name="Scott C.E."/>
            <person name="Gilbert J.G.R."/>
            <person name="Clamp M.E."/>
            <person name="Bethel G."/>
            <person name="Milne S."/>
            <person name="Ainscough R."/>
            <person name="Almeida J.P."/>
            <person name="Ambrose K.D."/>
            <person name="Andrews T.D."/>
            <person name="Ashwell R.I.S."/>
            <person name="Babbage A.K."/>
            <person name="Bagguley C.L."/>
            <person name="Bailey J."/>
            <person name="Banerjee R."/>
            <person name="Barker D.J."/>
            <person name="Barlow K.F."/>
            <person name="Bates K."/>
            <person name="Beare D.M."/>
            <person name="Beasley H."/>
            <person name="Beasley O."/>
            <person name="Bird C.P."/>
            <person name="Blakey S.E."/>
            <person name="Bray-Allen S."/>
            <person name="Brook J."/>
            <person name="Brown A.J."/>
            <person name="Brown J.Y."/>
            <person name="Burford D.C."/>
            <person name="Burrill W."/>
            <person name="Burton J."/>
            <person name="Carder C."/>
            <person name="Carter N.P."/>
            <person name="Chapman J.C."/>
            <person name="Clark S.Y."/>
            <person name="Clark G."/>
            <person name="Clee C.M."/>
            <person name="Clegg S."/>
            <person name="Cobley V."/>
            <person name="Collier R.E."/>
            <person name="Collins J.E."/>
            <person name="Colman L.K."/>
            <person name="Corby N.R."/>
            <person name="Coville G.J."/>
            <person name="Culley K.M."/>
            <person name="Dhami P."/>
            <person name="Davies J."/>
            <person name="Dunn M."/>
            <person name="Earthrowl M.E."/>
            <person name="Ellington A.E."/>
            <person name="Evans K.A."/>
            <person name="Faulkner L."/>
            <person name="Francis M.D."/>
            <person name="Frankish A."/>
            <person name="Frankland J."/>
            <person name="French L."/>
            <person name="Garner P."/>
            <person name="Garnett J."/>
            <person name="Ghori M.J."/>
            <person name="Gilby L.M."/>
            <person name="Gillson C.J."/>
            <person name="Glithero R.J."/>
            <person name="Grafham D.V."/>
            <person name="Grant M."/>
            <person name="Gribble S."/>
            <person name="Griffiths C."/>
            <person name="Griffiths M.N.D."/>
            <person name="Hall R."/>
            <person name="Halls K.S."/>
            <person name="Hammond S."/>
            <person name="Harley J.L."/>
            <person name="Hart E.A."/>
            <person name="Heath P.D."/>
            <person name="Heathcott R."/>
            <person name="Holmes S.J."/>
            <person name="Howden P.J."/>
            <person name="Howe K.L."/>
            <person name="Howell G.R."/>
            <person name="Huckle E."/>
            <person name="Humphray S.J."/>
            <person name="Humphries M.D."/>
            <person name="Hunt A.R."/>
            <person name="Johnson C.M."/>
            <person name="Joy A.A."/>
            <person name="Kay M."/>
            <person name="Keenan S.J."/>
            <person name="Kimberley A.M."/>
            <person name="King A."/>
            <person name="Laird G.K."/>
            <person name="Langford C."/>
            <person name="Lawlor S."/>
            <person name="Leongamornlert D.A."/>
            <person name="Leversha M."/>
            <person name="Lloyd C.R."/>
            <person name="Lloyd D.M."/>
            <person name="Loveland J.E."/>
            <person name="Lovell J."/>
            <person name="Martin S."/>
            <person name="Mashreghi-Mohammadi M."/>
            <person name="Maslen G.L."/>
            <person name="Matthews L."/>
            <person name="McCann O.T."/>
            <person name="McLaren S.J."/>
            <person name="McLay K."/>
            <person name="McMurray A."/>
            <person name="Moore M.J.F."/>
            <person name="Mullikin J.C."/>
            <person name="Niblett D."/>
            <person name="Nickerson T."/>
            <person name="Novik K.L."/>
            <person name="Oliver K."/>
            <person name="Overton-Larty E.K."/>
            <person name="Parker A."/>
            <person name="Patel R."/>
            <person name="Pearce A.V."/>
            <person name="Peck A.I."/>
            <person name="Phillimore B.J.C.T."/>
            <person name="Phillips S."/>
            <person name="Plumb R.W."/>
            <person name="Porter K.M."/>
            <person name="Ramsey Y."/>
            <person name="Ranby S.A."/>
            <person name="Rice C.M."/>
            <person name="Ross M.T."/>
            <person name="Searle S.M."/>
            <person name="Sehra H.K."/>
            <person name="Sheridan E."/>
            <person name="Skuce C.D."/>
            <person name="Smith S."/>
            <person name="Smith M."/>
            <person name="Spraggon L."/>
            <person name="Squares S.L."/>
            <person name="Steward C.A."/>
            <person name="Sycamore N."/>
            <person name="Tamlyn-Hall G."/>
            <person name="Tester J."/>
            <person name="Theaker A.J."/>
            <person name="Thomas D.W."/>
            <person name="Thorpe A."/>
            <person name="Tracey A."/>
            <person name="Tromans A."/>
            <person name="Tubby B."/>
            <person name="Wall M."/>
            <person name="Wallis J.M."/>
            <person name="West A.P."/>
            <person name="White S.S."/>
            <person name="Whitehead S.L."/>
            <person name="Whittaker H."/>
            <person name="Wild A."/>
            <person name="Willey D.J."/>
            <person name="Wilmer T.E."/>
            <person name="Wood J.M."/>
            <person name="Wray P.W."/>
            <person name="Wyatt J.C."/>
            <person name="Young L."/>
            <person name="Younger R.M."/>
            <person name="Bentley D.R."/>
            <person name="Coulson A."/>
            <person name="Durbin R.M."/>
            <person name="Hubbard T."/>
            <person name="Sulston J.E."/>
            <person name="Dunham I."/>
            <person name="Rogers J."/>
            <person name="Beck S."/>
        </authorList>
    </citation>
    <scope>NUCLEOTIDE SEQUENCE [LARGE SCALE GENOMIC DNA]</scope>
</reference>
<reference key="3">
    <citation type="journal article" date="2004" name="Genome Res.">
        <title>The status, quality, and expansion of the NIH full-length cDNA project: the Mammalian Gene Collection (MGC).</title>
        <authorList>
            <consortium name="The MGC Project Team"/>
        </authorList>
    </citation>
    <scope>NUCLEOTIDE SEQUENCE [LARGE SCALE MRNA] (ISOFORM 2)</scope>
    <source>
        <tissue>Brain</tissue>
    </source>
</reference>
<reference key="4">
    <citation type="journal article" date="2007" name="BMC Genomics">
        <title>The full-ORF clone resource of the German cDNA consortium.</title>
        <authorList>
            <person name="Bechtel S."/>
            <person name="Rosenfelder H."/>
            <person name="Duda A."/>
            <person name="Schmidt C.P."/>
            <person name="Ernst U."/>
            <person name="Wellenreuther R."/>
            <person name="Mehrle A."/>
            <person name="Schuster C."/>
            <person name="Bahr A."/>
            <person name="Bloecker H."/>
            <person name="Heubner D."/>
            <person name="Hoerlein A."/>
            <person name="Michel G."/>
            <person name="Wedler H."/>
            <person name="Koehrer K."/>
            <person name="Ottenwaelder B."/>
            <person name="Poustka A."/>
            <person name="Wiemann S."/>
            <person name="Schupp I."/>
        </authorList>
    </citation>
    <scope>NUCLEOTIDE SEQUENCE [LARGE SCALE MRNA] OF 110-814 (ISOFORM 3)</scope>
    <source>
        <tissue>Spinal cord</tissue>
    </source>
</reference>
<reference key="5">
    <citation type="journal article" date="2006" name="Science">
        <title>The consensus coding sequences of human breast and colorectal cancers.</title>
        <authorList>
            <person name="Sjoeblom T."/>
            <person name="Jones S."/>
            <person name="Wood L.D."/>
            <person name="Parsons D.W."/>
            <person name="Lin J."/>
            <person name="Barber T.D."/>
            <person name="Mandelker D."/>
            <person name="Leary R.J."/>
            <person name="Ptak J."/>
            <person name="Silliman N."/>
            <person name="Szabo S."/>
            <person name="Buckhaults P."/>
            <person name="Farrell C."/>
            <person name="Meeh P."/>
            <person name="Markowitz S.D."/>
            <person name="Willis J."/>
            <person name="Dawson D."/>
            <person name="Willson J.K.V."/>
            <person name="Gazdar A.F."/>
            <person name="Hartigan J."/>
            <person name="Wu L."/>
            <person name="Liu C."/>
            <person name="Parmigiani G."/>
            <person name="Park B.H."/>
            <person name="Bachman K.E."/>
            <person name="Papadopoulos N."/>
            <person name="Vogelstein B."/>
            <person name="Kinzler K.W."/>
            <person name="Velculescu V.E."/>
        </authorList>
    </citation>
    <scope>VARIANT [LARGE SCALE ANALYSIS] GLU-386</scope>
</reference>
<sequence length="814" mass="92569">MVKQTIQIFARVKPPVRKHQQGIYSIDEDEKLIPSLEIILPRDLADGFVNNKRESYKFKFQRIFDQDANQETVFENIAKPVAGSVLAGYNGTIFAYGQTGSGKTFTITGGAERYSDRGIIPRTLSYIFEQLQKDSSKIYTTHISYLEIYNECGYDLLDPRHEASSLEDLPKVTILEDPDQNIHLKNLTLHQATTEEEALNLLFLGDTNRMIAETPMNQASTRSHCIFTIHLSSKEPGSATVRHAKLHLVDLAGSERVAKTGVGGHLLTEAKYINLSLHYLEQVIIALSEKHRSHIPYRNSMMTSVLRDSLGGNCMTTMIATLSLEKRNLDESISTCRFAQRVALIKNEAVLNEEINPRLVIKRLQKEIQELKDELAMVTGEQRTEALTEAELLQLEKLITSFLEDQDSDSRLEVGADMRKVHHCFHHLKKLLNDKKILENNTVSSESKDQDCQEPLKEEEYRKLRDILKQRDNEINILVNMLKKEKKKAQEALHLAGMDRREFRQSQSPPFRLGNPEEGQRMRLSSAPSQAQDFSILGKRSSLLHKKIGMREEMSLGCQEAFEIFKRDHADSVTIDDNKQILKQRFSEAKALGESINEARSKIGHLKEEITQRHIQQVALGISENMAVPLMPDQQEEKLRSQLEEEKRRYKTMFTRLKALKVEIEHLQLLMDKAKVKLQKEFEVWWAEEATNLQVNSPAVNSLDHTKPFLQTSDSQHEWSQLLSNKSSGGWEVQDQGTGRFDVCDVNARKILPSPCPSPHSQKQSSTSTPLEDSIPKRPVSSIPLTGDSQTDSDIIAFIKARQSILQKQCLGSN</sequence>
<protein>
    <recommendedName>
        <fullName>Kinesin-like protein KIF6</fullName>
    </recommendedName>
</protein>